<comment type="function">
    <text evidence="1">This protein is a component of the acetyl coenzyme A carboxylase complex; first, biotin carboxylase catalyzes the carboxylation of the carrier protein and then the transcarboxylase transfers the carboxyl group to form malonyl-CoA.</text>
</comment>
<comment type="pathway">
    <text>Lipid metabolism; fatty acid biosynthesis.</text>
</comment>
<comment type="subunit">
    <text evidence="1">Homodimer.</text>
</comment>
<sequence>MDLKQIEKLMIAMGRNKMKRIVIKREGLELELERDTVPSIQEPVFYDNRLFAGFSQERPIPTDQNLGNPIVKESIEKKESEAPAQGDFIVSPLVGTFYGSPSPEAPAFIKPGDTVSEDTVVCIVEAMKVMNEVKAGMSGRVEEILITNGDPVQFGSKLFRIVKA</sequence>
<reference key="1">
    <citation type="journal article" date="1998" name="Science">
        <title>Genome sequence of an obligate intracellular pathogen of humans: Chlamydia trachomatis.</title>
        <authorList>
            <person name="Stephens R.S."/>
            <person name="Kalman S."/>
            <person name="Lammel C.J."/>
            <person name="Fan J."/>
            <person name="Marathe R."/>
            <person name="Aravind L."/>
            <person name="Mitchell W.P."/>
            <person name="Olinger L."/>
            <person name="Tatusov R.L."/>
            <person name="Zhao Q."/>
            <person name="Koonin E.V."/>
            <person name="Davis R.W."/>
        </authorList>
    </citation>
    <scope>NUCLEOTIDE SEQUENCE [LARGE SCALE GENOMIC DNA]</scope>
    <source>
        <strain>ATCC VR-885 / DSM 19411 / UW-3/Cx</strain>
    </source>
</reference>
<organism>
    <name type="scientific">Chlamydia trachomatis serovar D (strain ATCC VR-885 / DSM 19411 / UW-3/Cx)</name>
    <dbReference type="NCBI Taxonomy" id="272561"/>
    <lineage>
        <taxon>Bacteria</taxon>
        <taxon>Pseudomonadati</taxon>
        <taxon>Chlamydiota</taxon>
        <taxon>Chlamydiia</taxon>
        <taxon>Chlamydiales</taxon>
        <taxon>Chlamydiaceae</taxon>
        <taxon>Chlamydia/Chlamydophila group</taxon>
        <taxon>Chlamydia</taxon>
    </lineage>
</organism>
<accession>O84125</accession>
<proteinExistence type="inferred from homology"/>
<name>BCCP_CHLTR</name>
<protein>
    <recommendedName>
        <fullName>Biotin carboxyl carrier protein of acetyl-CoA carboxylase</fullName>
        <shortName>BCCP</shortName>
    </recommendedName>
</protein>
<gene>
    <name type="primary">accB</name>
    <name type="ordered locus">CT_123</name>
</gene>
<feature type="chain" id="PRO_0000146804" description="Biotin carboxyl carrier protein of acetyl-CoA carboxylase">
    <location>
        <begin position="1"/>
        <end position="164"/>
    </location>
</feature>
<feature type="domain" description="Biotinyl-binding" evidence="2">
    <location>
        <begin position="86"/>
        <end position="162"/>
    </location>
</feature>
<feature type="modified residue" description="N6-biotinyllysine" evidence="1 2">
    <location>
        <position position="128"/>
    </location>
</feature>
<keyword id="KW-0092">Biotin</keyword>
<keyword id="KW-0275">Fatty acid biosynthesis</keyword>
<keyword id="KW-0276">Fatty acid metabolism</keyword>
<keyword id="KW-0444">Lipid biosynthesis</keyword>
<keyword id="KW-0443">Lipid metabolism</keyword>
<keyword id="KW-1185">Reference proteome</keyword>
<dbReference type="EMBL" id="AE001273">
    <property type="protein sequence ID" value="AAC67714.1"/>
    <property type="molecule type" value="Genomic_DNA"/>
</dbReference>
<dbReference type="PIR" id="G71553">
    <property type="entry name" value="G71553"/>
</dbReference>
<dbReference type="RefSeq" id="NP_219626.1">
    <property type="nucleotide sequence ID" value="NC_000117.1"/>
</dbReference>
<dbReference type="RefSeq" id="WP_009871470.1">
    <property type="nucleotide sequence ID" value="NC_000117.1"/>
</dbReference>
<dbReference type="SMR" id="O84125"/>
<dbReference type="FunCoup" id="O84125">
    <property type="interactions" value="133"/>
</dbReference>
<dbReference type="STRING" id="272561.CT_123"/>
<dbReference type="EnsemblBacteria" id="AAC67714">
    <property type="protein sequence ID" value="AAC67714"/>
    <property type="gene ID" value="CT_123"/>
</dbReference>
<dbReference type="GeneID" id="884172"/>
<dbReference type="KEGG" id="ctr:CT_123"/>
<dbReference type="PATRIC" id="fig|272561.5.peg.135"/>
<dbReference type="HOGENOM" id="CLU_016733_3_0_0"/>
<dbReference type="InParanoid" id="O84125"/>
<dbReference type="OrthoDB" id="9807469at2"/>
<dbReference type="UniPathway" id="UPA00094"/>
<dbReference type="Proteomes" id="UP000000431">
    <property type="component" value="Chromosome"/>
</dbReference>
<dbReference type="GO" id="GO:0009317">
    <property type="term" value="C:acetyl-CoA carboxylase complex"/>
    <property type="evidence" value="ECO:0007669"/>
    <property type="project" value="InterPro"/>
</dbReference>
<dbReference type="GO" id="GO:0003989">
    <property type="term" value="F:acetyl-CoA carboxylase activity"/>
    <property type="evidence" value="ECO:0007669"/>
    <property type="project" value="InterPro"/>
</dbReference>
<dbReference type="GO" id="GO:0006633">
    <property type="term" value="P:fatty acid biosynthetic process"/>
    <property type="evidence" value="ECO:0007669"/>
    <property type="project" value="UniProtKB-UniPathway"/>
</dbReference>
<dbReference type="CDD" id="cd06850">
    <property type="entry name" value="biotinyl_domain"/>
    <property type="match status" value="1"/>
</dbReference>
<dbReference type="Gene3D" id="2.40.50.100">
    <property type="match status" value="1"/>
</dbReference>
<dbReference type="InterPro" id="IPR001249">
    <property type="entry name" value="AcCoA_biotinCC"/>
</dbReference>
<dbReference type="InterPro" id="IPR001882">
    <property type="entry name" value="Biotin_BS"/>
</dbReference>
<dbReference type="InterPro" id="IPR050709">
    <property type="entry name" value="Biotin_Carboxyl_Carrier/Decarb"/>
</dbReference>
<dbReference type="InterPro" id="IPR000089">
    <property type="entry name" value="Biotin_lipoyl"/>
</dbReference>
<dbReference type="InterPro" id="IPR011053">
    <property type="entry name" value="Single_hybrid_motif"/>
</dbReference>
<dbReference type="NCBIfam" id="TIGR00531">
    <property type="entry name" value="BCCP"/>
    <property type="match status" value="1"/>
</dbReference>
<dbReference type="PANTHER" id="PTHR45266">
    <property type="entry name" value="OXALOACETATE DECARBOXYLASE ALPHA CHAIN"/>
    <property type="match status" value="1"/>
</dbReference>
<dbReference type="PANTHER" id="PTHR45266:SF3">
    <property type="entry name" value="OXALOACETATE DECARBOXYLASE ALPHA CHAIN"/>
    <property type="match status" value="1"/>
</dbReference>
<dbReference type="Pfam" id="PF00364">
    <property type="entry name" value="Biotin_lipoyl"/>
    <property type="match status" value="1"/>
</dbReference>
<dbReference type="PRINTS" id="PR01071">
    <property type="entry name" value="ACOABIOTINCC"/>
</dbReference>
<dbReference type="SUPFAM" id="SSF51230">
    <property type="entry name" value="Single hybrid motif"/>
    <property type="match status" value="1"/>
</dbReference>
<dbReference type="PROSITE" id="PS00188">
    <property type="entry name" value="BIOTIN"/>
    <property type="match status" value="1"/>
</dbReference>
<dbReference type="PROSITE" id="PS50968">
    <property type="entry name" value="BIOTINYL_LIPOYL"/>
    <property type="match status" value="1"/>
</dbReference>
<evidence type="ECO:0000250" key="1"/>
<evidence type="ECO:0000255" key="2">
    <source>
        <dbReference type="PROSITE-ProRule" id="PRU01066"/>
    </source>
</evidence>